<dbReference type="EMBL" id="DS231663">
    <property type="protein sequence ID" value="ESU08050.1"/>
    <property type="molecule type" value="Genomic_DNA"/>
</dbReference>
<dbReference type="EMBL" id="HG970332">
    <property type="protein sequence ID" value="CEF74916.1"/>
    <property type="molecule type" value="Genomic_DNA"/>
</dbReference>
<dbReference type="RefSeq" id="XP_011318535.1">
    <property type="nucleotide sequence ID" value="XM_011320233.1"/>
</dbReference>
<dbReference type="SMR" id="I1S5P3"/>
<dbReference type="STRING" id="229533.I1S5P3"/>
<dbReference type="GeneID" id="23558979"/>
<dbReference type="KEGG" id="fgr:FGSG_12164"/>
<dbReference type="VEuPathDB" id="FungiDB:FGRAMPH1_01G06223"/>
<dbReference type="eggNOG" id="KOG4476">
    <property type="taxonomic scope" value="Eukaryota"/>
</dbReference>
<dbReference type="HOGENOM" id="CLU_811462_0_0_1"/>
<dbReference type="InParanoid" id="I1S5P3"/>
<dbReference type="OrthoDB" id="110434at110618"/>
<dbReference type="PHI-base" id="PHI:2399"/>
<dbReference type="PHI-base" id="PHI:5253"/>
<dbReference type="Proteomes" id="UP000070720">
    <property type="component" value="Chromosome 1"/>
</dbReference>
<dbReference type="GO" id="GO:0005634">
    <property type="term" value="C:nucleus"/>
    <property type="evidence" value="ECO:0007669"/>
    <property type="project" value="UniProtKB-SubCell"/>
</dbReference>
<dbReference type="GO" id="GO:0003677">
    <property type="term" value="F:DNA binding"/>
    <property type="evidence" value="ECO:0007669"/>
    <property type="project" value="TreeGrafter"/>
</dbReference>
<dbReference type="InterPro" id="IPR018608">
    <property type="entry name" value="Gti1/Pac2"/>
</dbReference>
<dbReference type="PANTHER" id="PTHR28027">
    <property type="entry name" value="TRANSCRIPTIONAL REGULATOR MIT1"/>
    <property type="match status" value="1"/>
</dbReference>
<dbReference type="PANTHER" id="PTHR28027:SF2">
    <property type="entry name" value="TRANSCRIPTIONAL REGULATOR MIT1"/>
    <property type="match status" value="1"/>
</dbReference>
<dbReference type="Pfam" id="PF09729">
    <property type="entry name" value="Gti1_Pac2"/>
    <property type="match status" value="1"/>
</dbReference>
<reference key="1">
    <citation type="journal article" date="2007" name="Science">
        <title>The Fusarium graminearum genome reveals a link between localized polymorphism and pathogen specialization.</title>
        <authorList>
            <person name="Cuomo C.A."/>
            <person name="Gueldener U."/>
            <person name="Xu J.-R."/>
            <person name="Trail F."/>
            <person name="Turgeon B.G."/>
            <person name="Di Pietro A."/>
            <person name="Walton J.D."/>
            <person name="Ma L.-J."/>
            <person name="Baker S.E."/>
            <person name="Rep M."/>
            <person name="Adam G."/>
            <person name="Antoniw J."/>
            <person name="Baldwin T."/>
            <person name="Calvo S.E."/>
            <person name="Chang Y.-L."/>
            <person name="DeCaprio D."/>
            <person name="Gale L.R."/>
            <person name="Gnerre S."/>
            <person name="Goswami R.S."/>
            <person name="Hammond-Kosack K."/>
            <person name="Harris L.J."/>
            <person name="Hilburn K."/>
            <person name="Kennell J.C."/>
            <person name="Kroken S."/>
            <person name="Magnuson J.K."/>
            <person name="Mannhaupt G."/>
            <person name="Mauceli E.W."/>
            <person name="Mewes H.-W."/>
            <person name="Mitterbauer R."/>
            <person name="Muehlbauer G."/>
            <person name="Muensterkoetter M."/>
            <person name="Nelson D."/>
            <person name="O'Donnell K."/>
            <person name="Ouellet T."/>
            <person name="Qi W."/>
            <person name="Quesneville H."/>
            <person name="Roncero M.I.G."/>
            <person name="Seong K.-Y."/>
            <person name="Tetko I.V."/>
            <person name="Urban M."/>
            <person name="Waalwijk C."/>
            <person name="Ward T.J."/>
            <person name="Yao J."/>
            <person name="Birren B.W."/>
            <person name="Kistler H.C."/>
        </authorList>
    </citation>
    <scope>NUCLEOTIDE SEQUENCE [LARGE SCALE GENOMIC DNA]</scope>
    <source>
        <strain>ATCC MYA-4620 / CBS 123657 / FGSC 9075 / NRRL 31084 / PH-1</strain>
    </source>
</reference>
<reference key="2">
    <citation type="journal article" date="2010" name="Nature">
        <title>Comparative genomics reveals mobile pathogenicity chromosomes in Fusarium.</title>
        <authorList>
            <person name="Ma L.-J."/>
            <person name="van der Does H.C."/>
            <person name="Borkovich K.A."/>
            <person name="Coleman J.J."/>
            <person name="Daboussi M.-J."/>
            <person name="Di Pietro A."/>
            <person name="Dufresne M."/>
            <person name="Freitag M."/>
            <person name="Grabherr M."/>
            <person name="Henrissat B."/>
            <person name="Houterman P.M."/>
            <person name="Kang S."/>
            <person name="Shim W.-B."/>
            <person name="Woloshuk C."/>
            <person name="Xie X."/>
            <person name="Xu J.-R."/>
            <person name="Antoniw J."/>
            <person name="Baker S.E."/>
            <person name="Bluhm B.H."/>
            <person name="Breakspear A."/>
            <person name="Brown D.W."/>
            <person name="Butchko R.A.E."/>
            <person name="Chapman S."/>
            <person name="Coulson R."/>
            <person name="Coutinho P.M."/>
            <person name="Danchin E.G.J."/>
            <person name="Diener A."/>
            <person name="Gale L.R."/>
            <person name="Gardiner D.M."/>
            <person name="Goff S."/>
            <person name="Hammond-Kosack K.E."/>
            <person name="Hilburn K."/>
            <person name="Hua-Van A."/>
            <person name="Jonkers W."/>
            <person name="Kazan K."/>
            <person name="Kodira C.D."/>
            <person name="Koehrsen M."/>
            <person name="Kumar L."/>
            <person name="Lee Y.-H."/>
            <person name="Li L."/>
            <person name="Manners J.M."/>
            <person name="Miranda-Saavedra D."/>
            <person name="Mukherjee M."/>
            <person name="Park G."/>
            <person name="Park J."/>
            <person name="Park S.-Y."/>
            <person name="Proctor R.H."/>
            <person name="Regev A."/>
            <person name="Ruiz-Roldan M.C."/>
            <person name="Sain D."/>
            <person name="Sakthikumar S."/>
            <person name="Sykes S."/>
            <person name="Schwartz D.C."/>
            <person name="Turgeon B.G."/>
            <person name="Wapinski I."/>
            <person name="Yoder O."/>
            <person name="Young S."/>
            <person name="Zeng Q."/>
            <person name="Zhou S."/>
            <person name="Galagan J."/>
            <person name="Cuomo C.A."/>
            <person name="Kistler H.C."/>
            <person name="Rep M."/>
        </authorList>
    </citation>
    <scope>GENOME REANNOTATION</scope>
    <source>
        <strain>ATCC MYA-4620 / CBS 123657 / FGSC 9075 / NRRL 31084 / PH-1</strain>
    </source>
</reference>
<reference key="3">
    <citation type="journal article" date="2015" name="BMC Genomics">
        <title>The completed genome sequence of the pathogenic ascomycete fungus Fusarium graminearum.</title>
        <authorList>
            <person name="King R."/>
            <person name="Urban M."/>
            <person name="Hammond-Kosack M.C.U."/>
            <person name="Hassani-Pak K."/>
            <person name="Hammond-Kosack K.E."/>
        </authorList>
    </citation>
    <scope>NUCLEOTIDE SEQUENCE [LARGE SCALE GENOMIC DNA]</scope>
    <source>
        <strain>ATCC MYA-4620 / CBS 123657 / FGSC 9075 / NRRL 31084 / PH-1</strain>
    </source>
</reference>
<reference key="4">
    <citation type="journal article" date="2012" name="PLoS Pathog.">
        <title>The Wor1-like protein Fgp1 regulates pathogenicity, toxin synthesis and reproduction in the phytopathogenic fungus Fusarium graminearum.</title>
        <authorList>
            <person name="Jonkers W."/>
            <person name="Dong Y."/>
            <person name="Broz K."/>
            <person name="Kistler H.C."/>
        </authorList>
    </citation>
    <scope>DISRUPTION PHENOTYPE</scope>
    <scope>FUNCTION</scope>
</reference>
<feature type="chain" id="PRO_0000431526" description="Global transcription regulator FGP1">
    <location>
        <begin position="1"/>
        <end position="342"/>
    </location>
</feature>
<feature type="region of interest" description="Disordered" evidence="2">
    <location>
        <begin position="91"/>
        <end position="113"/>
    </location>
</feature>
<accession>I1S5P3</accession>
<accession>A0A098DAF4</accession>
<accession>A0A0E0RUJ1</accession>
<comment type="function">
    <text evidence="3">Global transcriptional regulator of pathogenicity. Regulates many genes during growth in putrescine medium and during infection. Involved in the developmental processes of conidium formation and sexual reproduction and modulates a morphological change that accompanies mycotoxin production.</text>
</comment>
<comment type="subcellular location">
    <subcellularLocation>
        <location evidence="1">Nucleus</location>
    </subcellularLocation>
</comment>
<comment type="disruption phenotype">
    <text evidence="3">Results in greatly reduced pathogenicity and loss of trichothecene toxin accumulation in infected wheat plants. Exhibits normal vegetative growth but shows defects in asexual and sexual spore development.</text>
</comment>
<comment type="similarity">
    <text evidence="5">Belongs to the MIT1/WOR1 family.</text>
</comment>
<proteinExistence type="inferred from homology"/>
<sequence>MANSVLTATYEGYIRDTADALRIFEACLTGSLTHTARRPHDRERSTLITSGNVFVYEEGSSGIKRWTDGVNWSPSRILGNFLVYREMNQPFSPGEKKRASKKPKKQAGVAKAYDHRPQATRFSSMPNDPAGVCAGGDGGAGDEDRDLVGSLTDSYDFKPNSLIKKTISITHNGIPHHLVSYYTVDDVRSGRLVRPSDHEFFGRVQPRMELMSGQNFRVPLEDGGDEESRGVMSHGQQVMPYPCNDYQIFQHAYGNAAAPRTGQFTYGPPQNGTYAPVSVPATHAIQNGTYAPVSVPATPALQNGTYLPVPAPQNGSYYNLHQNVHQNVHQNPAYPWYHAQLQ</sequence>
<keyword id="KW-0539">Nucleus</keyword>
<keyword id="KW-1185">Reference proteome</keyword>
<keyword id="KW-0804">Transcription</keyword>
<keyword id="KW-0805">Transcription regulation</keyword>
<keyword id="KW-0843">Virulence</keyword>
<name>WOR1_GIBZE</name>
<organism>
    <name type="scientific">Gibberella zeae (strain ATCC MYA-4620 / CBS 123657 / FGSC 9075 / NRRL 31084 / PH-1)</name>
    <name type="common">Wheat head blight fungus</name>
    <name type="synonym">Fusarium graminearum</name>
    <dbReference type="NCBI Taxonomy" id="229533"/>
    <lineage>
        <taxon>Eukaryota</taxon>
        <taxon>Fungi</taxon>
        <taxon>Dikarya</taxon>
        <taxon>Ascomycota</taxon>
        <taxon>Pezizomycotina</taxon>
        <taxon>Sordariomycetes</taxon>
        <taxon>Hypocreomycetidae</taxon>
        <taxon>Hypocreales</taxon>
        <taxon>Nectriaceae</taxon>
        <taxon>Fusarium</taxon>
    </lineage>
</organism>
<protein>
    <recommendedName>
        <fullName evidence="5">Global transcription regulator FGP1</fullName>
    </recommendedName>
</protein>
<evidence type="ECO:0000250" key="1">
    <source>
        <dbReference type="UniProtKB" id="J9N5P9"/>
    </source>
</evidence>
<evidence type="ECO:0000256" key="2">
    <source>
        <dbReference type="SAM" id="MobiDB-lite"/>
    </source>
</evidence>
<evidence type="ECO:0000269" key="3">
    <source>
    </source>
</evidence>
<evidence type="ECO:0000303" key="4">
    <source>
    </source>
</evidence>
<evidence type="ECO:0000305" key="5"/>
<gene>
    <name evidence="4" type="primary">FGP1</name>
    <name type="ORF">FGRRES_12164</name>
    <name type="ORF">FGSG_12164</name>
</gene>